<dbReference type="EMBL" id="M34854">
    <property type="protein sequence ID" value="AAA27658.1"/>
    <property type="molecule type" value="mRNA"/>
</dbReference>
<dbReference type="SMR" id="P31519"/>
<dbReference type="STRING" id="1443113.LC20_01204"/>
<dbReference type="eggNOG" id="COG2825">
    <property type="taxonomic scope" value="Bacteria"/>
</dbReference>
<dbReference type="GO" id="GO:0005829">
    <property type="term" value="C:cytosol"/>
    <property type="evidence" value="ECO:0007669"/>
    <property type="project" value="TreeGrafter"/>
</dbReference>
<dbReference type="GO" id="GO:0042597">
    <property type="term" value="C:periplasmic space"/>
    <property type="evidence" value="ECO:0007669"/>
    <property type="project" value="UniProtKB-SubCell"/>
</dbReference>
<dbReference type="GO" id="GO:0051082">
    <property type="term" value="F:unfolded protein binding"/>
    <property type="evidence" value="ECO:0007669"/>
    <property type="project" value="InterPro"/>
</dbReference>
<dbReference type="GO" id="GO:0061077">
    <property type="term" value="P:chaperone-mediated protein folding"/>
    <property type="evidence" value="ECO:0007669"/>
    <property type="project" value="TreeGrafter"/>
</dbReference>
<dbReference type="GO" id="GO:0050821">
    <property type="term" value="P:protein stabilization"/>
    <property type="evidence" value="ECO:0007669"/>
    <property type="project" value="TreeGrafter"/>
</dbReference>
<dbReference type="Gene3D" id="3.30.910.20">
    <property type="entry name" value="Skp domain"/>
    <property type="match status" value="1"/>
</dbReference>
<dbReference type="InterPro" id="IPR005632">
    <property type="entry name" value="Chaperone_Skp"/>
</dbReference>
<dbReference type="InterPro" id="IPR024930">
    <property type="entry name" value="Skp_dom_sf"/>
</dbReference>
<dbReference type="NCBIfam" id="NF008047">
    <property type="entry name" value="PRK10780.1"/>
    <property type="match status" value="1"/>
</dbReference>
<dbReference type="PANTHER" id="PTHR35089">
    <property type="entry name" value="CHAPERONE PROTEIN SKP"/>
    <property type="match status" value="1"/>
</dbReference>
<dbReference type="PANTHER" id="PTHR35089:SF1">
    <property type="entry name" value="CHAPERONE PROTEIN SKP"/>
    <property type="match status" value="1"/>
</dbReference>
<dbReference type="Pfam" id="PF03938">
    <property type="entry name" value="OmpH"/>
    <property type="match status" value="1"/>
</dbReference>
<dbReference type="PIRSF" id="PIRSF002094">
    <property type="entry name" value="OMP26_Skp"/>
    <property type="match status" value="1"/>
</dbReference>
<dbReference type="SMART" id="SM00935">
    <property type="entry name" value="OmpH"/>
    <property type="match status" value="1"/>
</dbReference>
<dbReference type="SUPFAM" id="SSF111384">
    <property type="entry name" value="OmpH-like"/>
    <property type="match status" value="1"/>
</dbReference>
<proteinExistence type="evidence at transcript level"/>
<gene>
    <name type="primary">skp</name>
    <name type="synonym">ompH</name>
</gene>
<feature type="signal peptide" evidence="2">
    <location>
        <begin position="1"/>
        <end position="22"/>
    </location>
</feature>
<feature type="chain" id="PRO_0000020180" description="Chaperone protein Skp">
    <location>
        <begin position="23"/>
        <end position="164"/>
    </location>
</feature>
<feature type="region of interest" description="Lipopolysaccharide binding" evidence="2">
    <location>
        <begin position="101"/>
        <end position="112"/>
    </location>
</feature>
<protein>
    <recommendedName>
        <fullName>Chaperone protein Skp</fullName>
    </recommendedName>
    <alternativeName>
        <fullName>Cationic 19 kDa outer membrane protein</fullName>
    </alternativeName>
</protein>
<evidence type="ECO:0000250" key="1"/>
<evidence type="ECO:0000255" key="2"/>
<evidence type="ECO:0000305" key="3"/>
<keyword id="KW-0143">Chaperone</keyword>
<keyword id="KW-0574">Periplasm</keyword>
<keyword id="KW-0732">Signal</keyword>
<reference key="1">
    <citation type="journal article" date="1991" name="J. Bacteriol.">
        <title>The ompH gene of Yersinia enterocolitica: cloning, sequencing, expression, and comparison with known enterobacterial ompH sequences.</title>
        <authorList>
            <person name="Hirvas L."/>
            <person name="Koski P."/>
            <person name="Vaara M."/>
        </authorList>
    </citation>
    <scope>NUCLEOTIDE SEQUENCE [MRNA]</scope>
</reference>
<comment type="function">
    <text evidence="1">Molecular chaperone that interacts specifically with outer membrane proteins, thus maintaining the solubility of early folding intermediates during passage through the periplasm.</text>
</comment>
<comment type="subunit">
    <text evidence="1">Homotrimer.</text>
</comment>
<comment type="subcellular location">
    <subcellularLocation>
        <location evidence="1">Periplasm</location>
    </subcellularLocation>
</comment>
<comment type="similarity">
    <text evidence="3">Belongs to the Skp family.</text>
</comment>
<accession>P31519</accession>
<organism>
    <name type="scientific">Yersinia enterocolitica</name>
    <dbReference type="NCBI Taxonomy" id="630"/>
    <lineage>
        <taxon>Bacteria</taxon>
        <taxon>Pseudomonadati</taxon>
        <taxon>Pseudomonadota</taxon>
        <taxon>Gammaproteobacteria</taxon>
        <taxon>Enterobacterales</taxon>
        <taxon>Yersiniaceae</taxon>
        <taxon>Yersinia</taxon>
    </lineage>
</organism>
<name>SKP_YEREN</name>
<sequence>MKKWLCAASLGLALAASASVQAAKIAIVNVSRIFQQLPESETVAKQLENEFKGRATELQGMESDLQTKMQKLQRDGSTMKASDRTKLENDVMKQRETFSTKAQAFEQDNRRRQMEERNKILSRIQDAVKSVASKGGYDVVIDANAVAYADPSKDITADVLKQVK</sequence>